<feature type="chain" id="PRO_1000127630" description="Ribulokinase">
    <location>
        <begin position="1"/>
        <end position="566"/>
    </location>
</feature>
<evidence type="ECO:0000255" key="1">
    <source>
        <dbReference type="HAMAP-Rule" id="MF_00520"/>
    </source>
</evidence>
<comment type="catalytic activity">
    <reaction evidence="1">
        <text>D-ribulose + ATP = D-ribulose 5-phosphate + ADP + H(+)</text>
        <dbReference type="Rhea" id="RHEA:17601"/>
        <dbReference type="ChEBI" id="CHEBI:15378"/>
        <dbReference type="ChEBI" id="CHEBI:17173"/>
        <dbReference type="ChEBI" id="CHEBI:30616"/>
        <dbReference type="ChEBI" id="CHEBI:58121"/>
        <dbReference type="ChEBI" id="CHEBI:456216"/>
        <dbReference type="EC" id="2.7.1.16"/>
    </reaction>
</comment>
<comment type="catalytic activity">
    <reaction evidence="1">
        <text>L-ribulose + ATP = L-ribulose 5-phosphate + ADP + H(+)</text>
        <dbReference type="Rhea" id="RHEA:22072"/>
        <dbReference type="ChEBI" id="CHEBI:15378"/>
        <dbReference type="ChEBI" id="CHEBI:16880"/>
        <dbReference type="ChEBI" id="CHEBI:30616"/>
        <dbReference type="ChEBI" id="CHEBI:58226"/>
        <dbReference type="ChEBI" id="CHEBI:456216"/>
        <dbReference type="EC" id="2.7.1.16"/>
    </reaction>
</comment>
<comment type="pathway">
    <text evidence="1">Carbohydrate degradation; L-arabinose degradation via L-ribulose; D-xylulose 5-phosphate from L-arabinose (bacterial route): step 2/3.</text>
</comment>
<comment type="similarity">
    <text evidence="1">Belongs to the ribulokinase family.</text>
</comment>
<sequence length="566" mass="61213">MAIAIGLDFGSDSVRALAVDCATGEEIATSVEWYPRWQKGQFCDAPNNQFRHHPRDYIESMEAALKTVLAELSAEQRAAVVGIGVDTTGSTPAPIDADGNVLALRPEFAENPNAMFVLWKDHTAVEEAEEITRLCHTPGNVDYSRYIGGIYSSEWFWAKILHVTRQDSAVAQSAASWIELCDWVPALLSGTTRPQDIRRGRCSAGHKSLWHESWGGLPPASFFDELDPILNRHLPSPLFTDTWTADIPVGTLCPEWAQRLGLPESVVISGGAFDCHMGAVGAGAQPNALVKVIGTSTCDILIADKQSVGERAVKGICGQVDGSVVPGFIGLEAGQSAFGDIYAWFGRVLGWPLEQLAAQHPELKEQINASQKQLLPALTEAWAKNPSLDHLPVVLDWFNGRRTPNANQRLKGVITDLNLATDAPLLFGGLIAATAFGARAIMECFTDQGIAVNNVMALGGIARKNQVIMQACCDVLNRPLQIVASDQCCALGAAIFAAVAAKVHADIPSAQQKMASAVEKTLQPRSEQAQRFEQLYRRYQQWAMSAEQHYLPTSAPAQAAQAVPTL</sequence>
<protein>
    <recommendedName>
        <fullName evidence="1">Ribulokinase</fullName>
        <ecNumber evidence="1">2.7.1.16</ecNumber>
    </recommendedName>
</protein>
<reference key="1">
    <citation type="journal article" date="2009" name="PLoS Genet.">
        <title>Organised genome dynamics in the Escherichia coli species results in highly diverse adaptive paths.</title>
        <authorList>
            <person name="Touchon M."/>
            <person name="Hoede C."/>
            <person name="Tenaillon O."/>
            <person name="Barbe V."/>
            <person name="Baeriswyl S."/>
            <person name="Bidet P."/>
            <person name="Bingen E."/>
            <person name="Bonacorsi S."/>
            <person name="Bouchier C."/>
            <person name="Bouvet O."/>
            <person name="Calteau A."/>
            <person name="Chiapello H."/>
            <person name="Clermont O."/>
            <person name="Cruveiller S."/>
            <person name="Danchin A."/>
            <person name="Diard M."/>
            <person name="Dossat C."/>
            <person name="Karoui M.E."/>
            <person name="Frapy E."/>
            <person name="Garry L."/>
            <person name="Ghigo J.M."/>
            <person name="Gilles A.M."/>
            <person name="Johnson J."/>
            <person name="Le Bouguenec C."/>
            <person name="Lescat M."/>
            <person name="Mangenot S."/>
            <person name="Martinez-Jehanne V."/>
            <person name="Matic I."/>
            <person name="Nassif X."/>
            <person name="Oztas S."/>
            <person name="Petit M.A."/>
            <person name="Pichon C."/>
            <person name="Rouy Z."/>
            <person name="Ruf C.S."/>
            <person name="Schneider D."/>
            <person name="Tourret J."/>
            <person name="Vacherie B."/>
            <person name="Vallenet D."/>
            <person name="Medigue C."/>
            <person name="Rocha E.P.C."/>
            <person name="Denamur E."/>
        </authorList>
    </citation>
    <scope>NUCLEOTIDE SEQUENCE [LARGE SCALE GENOMIC DNA]</scope>
    <source>
        <strain>UMN026 / ExPEC</strain>
    </source>
</reference>
<proteinExistence type="inferred from homology"/>
<dbReference type="EC" id="2.7.1.16" evidence="1"/>
<dbReference type="EMBL" id="CU928163">
    <property type="protein sequence ID" value="CAR11287.1"/>
    <property type="molecule type" value="Genomic_DNA"/>
</dbReference>
<dbReference type="RefSeq" id="WP_000951845.1">
    <property type="nucleotide sequence ID" value="NC_011751.1"/>
</dbReference>
<dbReference type="RefSeq" id="YP_002410842.1">
    <property type="nucleotide sequence ID" value="NC_011751.1"/>
</dbReference>
<dbReference type="SMR" id="B7N7T7"/>
<dbReference type="STRING" id="585056.ECUMN_0064"/>
<dbReference type="KEGG" id="eum:ECUMN_0064"/>
<dbReference type="PATRIC" id="fig|585056.7.peg.252"/>
<dbReference type="HOGENOM" id="CLU_009281_9_1_6"/>
<dbReference type="UniPathway" id="UPA00145">
    <property type="reaction ID" value="UER00566"/>
</dbReference>
<dbReference type="Proteomes" id="UP000007097">
    <property type="component" value="Chromosome"/>
</dbReference>
<dbReference type="GO" id="GO:0005737">
    <property type="term" value="C:cytoplasm"/>
    <property type="evidence" value="ECO:0007669"/>
    <property type="project" value="TreeGrafter"/>
</dbReference>
<dbReference type="GO" id="GO:0005524">
    <property type="term" value="F:ATP binding"/>
    <property type="evidence" value="ECO:0007669"/>
    <property type="project" value="UniProtKB-KW"/>
</dbReference>
<dbReference type="GO" id="GO:0019150">
    <property type="term" value="F:D-ribulokinase activity"/>
    <property type="evidence" value="ECO:0007669"/>
    <property type="project" value="RHEA"/>
</dbReference>
<dbReference type="GO" id="GO:0008741">
    <property type="term" value="F:ribulokinase activity"/>
    <property type="evidence" value="ECO:0007669"/>
    <property type="project" value="UniProtKB-UniRule"/>
</dbReference>
<dbReference type="GO" id="GO:0019569">
    <property type="term" value="P:L-arabinose catabolic process to xylulose 5-phosphate"/>
    <property type="evidence" value="ECO:0007669"/>
    <property type="project" value="UniProtKB-UniRule"/>
</dbReference>
<dbReference type="CDD" id="cd07781">
    <property type="entry name" value="ASKHA_NBD_FGGY_L-RBK"/>
    <property type="match status" value="1"/>
</dbReference>
<dbReference type="Gene3D" id="1.20.58.2240">
    <property type="match status" value="1"/>
</dbReference>
<dbReference type="Gene3D" id="3.30.420.40">
    <property type="match status" value="1"/>
</dbReference>
<dbReference type="HAMAP" id="MF_00520">
    <property type="entry name" value="Ribulokinase"/>
    <property type="match status" value="1"/>
</dbReference>
<dbReference type="InterPro" id="IPR043129">
    <property type="entry name" value="ATPase_NBD"/>
</dbReference>
<dbReference type="InterPro" id="IPR018485">
    <property type="entry name" value="FGGY_C"/>
</dbReference>
<dbReference type="InterPro" id="IPR005929">
    <property type="entry name" value="Ribulokinase"/>
</dbReference>
<dbReference type="NCBIfam" id="TIGR01234">
    <property type="entry name" value="L-ribulokinase"/>
    <property type="match status" value="1"/>
</dbReference>
<dbReference type="NCBIfam" id="NF003154">
    <property type="entry name" value="PRK04123.1"/>
    <property type="match status" value="1"/>
</dbReference>
<dbReference type="PANTHER" id="PTHR43435:SF4">
    <property type="entry name" value="FGGY CARBOHYDRATE KINASE DOMAIN-CONTAINING PROTEIN"/>
    <property type="match status" value="1"/>
</dbReference>
<dbReference type="PANTHER" id="PTHR43435">
    <property type="entry name" value="RIBULOKINASE"/>
    <property type="match status" value="1"/>
</dbReference>
<dbReference type="Pfam" id="PF02782">
    <property type="entry name" value="FGGY_C"/>
    <property type="match status" value="1"/>
</dbReference>
<dbReference type="SUPFAM" id="SSF53067">
    <property type="entry name" value="Actin-like ATPase domain"/>
    <property type="match status" value="2"/>
</dbReference>
<name>ARAB_ECOLU</name>
<gene>
    <name evidence="1" type="primary">araB</name>
    <name type="ordered locus">ECUMN_0064</name>
</gene>
<accession>B7N7T7</accession>
<organism>
    <name type="scientific">Escherichia coli O17:K52:H18 (strain UMN026 / ExPEC)</name>
    <dbReference type="NCBI Taxonomy" id="585056"/>
    <lineage>
        <taxon>Bacteria</taxon>
        <taxon>Pseudomonadati</taxon>
        <taxon>Pseudomonadota</taxon>
        <taxon>Gammaproteobacteria</taxon>
        <taxon>Enterobacterales</taxon>
        <taxon>Enterobacteriaceae</taxon>
        <taxon>Escherichia</taxon>
    </lineage>
</organism>
<keyword id="KW-0054">Arabinose catabolism</keyword>
<keyword id="KW-0067">ATP-binding</keyword>
<keyword id="KW-0119">Carbohydrate metabolism</keyword>
<keyword id="KW-0418">Kinase</keyword>
<keyword id="KW-0547">Nucleotide-binding</keyword>
<keyword id="KW-0808">Transferase</keyword>